<accession>A1R783</accession>
<name>NADD_PAEAT</name>
<sequence>MGGTFDPIHHGHLVAASEVAAKFGLDEVVFVPTGQPWQKSHKLVSRPEHRYLMTVIATASNPRFTVSRVDVDRPGPTFTIDTLRDLRAERPDADLFFITGADALAQILSWKDVDELWSLAHFVGVTRPGHELHDMGRDDVSLLEVPAMAISSTDCRTRVGAGNPVWYLVPDGVVQYIAKYGLYAAPANAADLTPALSGSDDQARTE</sequence>
<comment type="function">
    <text evidence="1">Catalyzes the reversible adenylation of nicotinate mononucleotide (NaMN) to nicotinic acid adenine dinucleotide (NaAD).</text>
</comment>
<comment type="catalytic activity">
    <reaction evidence="1">
        <text>nicotinate beta-D-ribonucleotide + ATP + H(+) = deamido-NAD(+) + diphosphate</text>
        <dbReference type="Rhea" id="RHEA:22860"/>
        <dbReference type="ChEBI" id="CHEBI:15378"/>
        <dbReference type="ChEBI" id="CHEBI:30616"/>
        <dbReference type="ChEBI" id="CHEBI:33019"/>
        <dbReference type="ChEBI" id="CHEBI:57502"/>
        <dbReference type="ChEBI" id="CHEBI:58437"/>
        <dbReference type="EC" id="2.7.7.18"/>
    </reaction>
</comment>
<comment type="pathway">
    <text evidence="1">Cofactor biosynthesis; NAD(+) biosynthesis; deamido-NAD(+) from nicotinate D-ribonucleotide: step 1/1.</text>
</comment>
<comment type="similarity">
    <text evidence="1">Belongs to the NadD family.</text>
</comment>
<dbReference type="EC" id="2.7.7.18" evidence="1"/>
<dbReference type="EMBL" id="CP000474">
    <property type="protein sequence ID" value="ABM08249.1"/>
    <property type="molecule type" value="Genomic_DNA"/>
</dbReference>
<dbReference type="RefSeq" id="WP_011775039.1">
    <property type="nucleotide sequence ID" value="NC_008711.1"/>
</dbReference>
<dbReference type="SMR" id="A1R783"/>
<dbReference type="STRING" id="290340.AAur_2361"/>
<dbReference type="KEGG" id="aau:AAur_2361"/>
<dbReference type="eggNOG" id="COG1057">
    <property type="taxonomic scope" value="Bacteria"/>
</dbReference>
<dbReference type="HOGENOM" id="CLU_069765_1_1_11"/>
<dbReference type="UniPathway" id="UPA00253">
    <property type="reaction ID" value="UER00332"/>
</dbReference>
<dbReference type="Proteomes" id="UP000000637">
    <property type="component" value="Chromosome"/>
</dbReference>
<dbReference type="GO" id="GO:0005524">
    <property type="term" value="F:ATP binding"/>
    <property type="evidence" value="ECO:0007669"/>
    <property type="project" value="UniProtKB-KW"/>
</dbReference>
<dbReference type="GO" id="GO:0004515">
    <property type="term" value="F:nicotinate-nucleotide adenylyltransferase activity"/>
    <property type="evidence" value="ECO:0007669"/>
    <property type="project" value="UniProtKB-UniRule"/>
</dbReference>
<dbReference type="GO" id="GO:0009435">
    <property type="term" value="P:NAD biosynthetic process"/>
    <property type="evidence" value="ECO:0007669"/>
    <property type="project" value="UniProtKB-UniRule"/>
</dbReference>
<dbReference type="CDD" id="cd02165">
    <property type="entry name" value="NMNAT"/>
    <property type="match status" value="1"/>
</dbReference>
<dbReference type="FunFam" id="3.40.50.620:FF:000039">
    <property type="entry name" value="Probable nicotinate-nucleotide adenylyltransferase"/>
    <property type="match status" value="1"/>
</dbReference>
<dbReference type="Gene3D" id="3.40.50.620">
    <property type="entry name" value="HUPs"/>
    <property type="match status" value="1"/>
</dbReference>
<dbReference type="HAMAP" id="MF_00244">
    <property type="entry name" value="NaMN_adenylyltr"/>
    <property type="match status" value="1"/>
</dbReference>
<dbReference type="InterPro" id="IPR004821">
    <property type="entry name" value="Cyt_trans-like"/>
</dbReference>
<dbReference type="InterPro" id="IPR005248">
    <property type="entry name" value="NadD/NMNAT"/>
</dbReference>
<dbReference type="InterPro" id="IPR014729">
    <property type="entry name" value="Rossmann-like_a/b/a_fold"/>
</dbReference>
<dbReference type="NCBIfam" id="TIGR00125">
    <property type="entry name" value="cyt_tran_rel"/>
    <property type="match status" value="1"/>
</dbReference>
<dbReference type="NCBIfam" id="TIGR00482">
    <property type="entry name" value="nicotinate (nicotinamide) nucleotide adenylyltransferase"/>
    <property type="match status" value="1"/>
</dbReference>
<dbReference type="NCBIfam" id="NF000840">
    <property type="entry name" value="PRK00071.1-3"/>
    <property type="match status" value="1"/>
</dbReference>
<dbReference type="PANTHER" id="PTHR39321">
    <property type="entry name" value="NICOTINATE-NUCLEOTIDE ADENYLYLTRANSFERASE-RELATED"/>
    <property type="match status" value="1"/>
</dbReference>
<dbReference type="PANTHER" id="PTHR39321:SF3">
    <property type="entry name" value="PHOSPHOPANTETHEINE ADENYLYLTRANSFERASE"/>
    <property type="match status" value="1"/>
</dbReference>
<dbReference type="Pfam" id="PF01467">
    <property type="entry name" value="CTP_transf_like"/>
    <property type="match status" value="1"/>
</dbReference>
<dbReference type="SUPFAM" id="SSF52374">
    <property type="entry name" value="Nucleotidylyl transferase"/>
    <property type="match status" value="1"/>
</dbReference>
<protein>
    <recommendedName>
        <fullName evidence="1">Probable nicotinate-nucleotide adenylyltransferase</fullName>
        <ecNumber evidence="1">2.7.7.18</ecNumber>
    </recommendedName>
    <alternativeName>
        <fullName evidence="1">Deamido-NAD(+) diphosphorylase</fullName>
    </alternativeName>
    <alternativeName>
        <fullName evidence="1">Deamido-NAD(+) pyrophosphorylase</fullName>
    </alternativeName>
    <alternativeName>
        <fullName evidence="1">Nicotinate mononucleotide adenylyltransferase</fullName>
        <shortName evidence="1">NaMN adenylyltransferase</shortName>
    </alternativeName>
</protein>
<gene>
    <name evidence="1" type="primary">nadD</name>
    <name type="ordered locus">AAur_2361</name>
</gene>
<keyword id="KW-0067">ATP-binding</keyword>
<keyword id="KW-0520">NAD</keyword>
<keyword id="KW-0547">Nucleotide-binding</keyword>
<keyword id="KW-0548">Nucleotidyltransferase</keyword>
<keyword id="KW-0662">Pyridine nucleotide biosynthesis</keyword>
<keyword id="KW-0808">Transferase</keyword>
<evidence type="ECO:0000255" key="1">
    <source>
        <dbReference type="HAMAP-Rule" id="MF_00244"/>
    </source>
</evidence>
<proteinExistence type="inferred from homology"/>
<feature type="chain" id="PRO_0000310094" description="Probable nicotinate-nucleotide adenylyltransferase">
    <location>
        <begin position="1"/>
        <end position="206"/>
    </location>
</feature>
<organism>
    <name type="scientific">Paenarthrobacter aurescens (strain TC1)</name>
    <dbReference type="NCBI Taxonomy" id="290340"/>
    <lineage>
        <taxon>Bacteria</taxon>
        <taxon>Bacillati</taxon>
        <taxon>Actinomycetota</taxon>
        <taxon>Actinomycetes</taxon>
        <taxon>Micrococcales</taxon>
        <taxon>Micrococcaceae</taxon>
        <taxon>Paenarthrobacter</taxon>
    </lineage>
</organism>
<reference key="1">
    <citation type="journal article" date="2006" name="PLoS Genet.">
        <title>Secrets of soil survival revealed by the genome sequence of Arthrobacter aurescens TC1.</title>
        <authorList>
            <person name="Mongodin E.F."/>
            <person name="Shapir N."/>
            <person name="Daugherty S.C."/>
            <person name="DeBoy R.T."/>
            <person name="Emerson J.B."/>
            <person name="Shvartzbeyn A."/>
            <person name="Radune D."/>
            <person name="Vamathevan J."/>
            <person name="Riggs F."/>
            <person name="Grinberg V."/>
            <person name="Khouri H.M."/>
            <person name="Wackett L.P."/>
            <person name="Nelson K.E."/>
            <person name="Sadowsky M.J."/>
        </authorList>
    </citation>
    <scope>NUCLEOTIDE SEQUENCE [LARGE SCALE GENOMIC DNA]</scope>
    <source>
        <strain>TC1</strain>
    </source>
</reference>